<gene>
    <name evidence="1" type="primary">murG</name>
    <name type="ordered locus">Tfu_1110</name>
</gene>
<accession>Q47QW9</accession>
<sequence length="379" mass="40526">MRVVLAGGGTAGHVEPALALADALRRINPDTQVLCLGTKRGLEQRLVPMRGYELAEIPAVPLPRKLTPQLLSVPGRLANAISTAAKHLDRVQADILVGFGGYVATPGYLAARSRRIPIVVHEANPLPGLANRLGARLTPHVFTGHPHTEIRNGRYIGIPLRTRISNLDRLAVGDKARSKFGLRPDLPTLLIFGGSQGAQAINQAAFDSAEDFYQAGIQVLHVVGPKNADGPEDRTRGGVPYVVVPYVDEMELAYAAADIAMCRSGALTCAELTAVGLPAVFVPLAIGNGEQRLNAEPIVQAGGGLMVANSELSRDWIREHLIPLLTDTDRIVAMSEAAARLGRRDADMALAREVIAIARGERPTPEMPIDYSEESGDTR</sequence>
<name>MURG_THEFY</name>
<dbReference type="EC" id="2.4.1.227" evidence="1"/>
<dbReference type="EMBL" id="CP000088">
    <property type="protein sequence ID" value="AAZ55148.1"/>
    <property type="molecule type" value="Genomic_DNA"/>
</dbReference>
<dbReference type="RefSeq" id="WP_011291557.1">
    <property type="nucleotide sequence ID" value="NC_007333.1"/>
</dbReference>
<dbReference type="SMR" id="Q47QW9"/>
<dbReference type="STRING" id="269800.Tfu_1110"/>
<dbReference type="CAZy" id="GT28">
    <property type="family name" value="Glycosyltransferase Family 28"/>
</dbReference>
<dbReference type="KEGG" id="tfu:Tfu_1110"/>
<dbReference type="eggNOG" id="COG0707">
    <property type="taxonomic scope" value="Bacteria"/>
</dbReference>
<dbReference type="HOGENOM" id="CLU_037404_1_0_11"/>
<dbReference type="OrthoDB" id="9808936at2"/>
<dbReference type="UniPathway" id="UPA00219"/>
<dbReference type="GO" id="GO:0005886">
    <property type="term" value="C:plasma membrane"/>
    <property type="evidence" value="ECO:0007669"/>
    <property type="project" value="UniProtKB-SubCell"/>
</dbReference>
<dbReference type="GO" id="GO:0051991">
    <property type="term" value="F:UDP-N-acetyl-D-glucosamine:N-acetylmuramoyl-L-alanyl-D-glutamyl-meso-2,6-diaminopimelyl-D-alanyl-D-alanine-diphosphoundecaprenol 4-beta-N-acetylglucosaminlytransferase activity"/>
    <property type="evidence" value="ECO:0007669"/>
    <property type="project" value="RHEA"/>
</dbReference>
<dbReference type="GO" id="GO:0050511">
    <property type="term" value="F:undecaprenyldiphospho-muramoylpentapeptide beta-N-acetylglucosaminyltransferase activity"/>
    <property type="evidence" value="ECO:0007669"/>
    <property type="project" value="UniProtKB-UniRule"/>
</dbReference>
<dbReference type="GO" id="GO:0005975">
    <property type="term" value="P:carbohydrate metabolic process"/>
    <property type="evidence" value="ECO:0007669"/>
    <property type="project" value="InterPro"/>
</dbReference>
<dbReference type="GO" id="GO:0051301">
    <property type="term" value="P:cell division"/>
    <property type="evidence" value="ECO:0007669"/>
    <property type="project" value="UniProtKB-KW"/>
</dbReference>
<dbReference type="GO" id="GO:0071555">
    <property type="term" value="P:cell wall organization"/>
    <property type="evidence" value="ECO:0007669"/>
    <property type="project" value="UniProtKB-KW"/>
</dbReference>
<dbReference type="GO" id="GO:0030259">
    <property type="term" value="P:lipid glycosylation"/>
    <property type="evidence" value="ECO:0007669"/>
    <property type="project" value="UniProtKB-UniRule"/>
</dbReference>
<dbReference type="GO" id="GO:0009252">
    <property type="term" value="P:peptidoglycan biosynthetic process"/>
    <property type="evidence" value="ECO:0007669"/>
    <property type="project" value="UniProtKB-UniRule"/>
</dbReference>
<dbReference type="GO" id="GO:0008360">
    <property type="term" value="P:regulation of cell shape"/>
    <property type="evidence" value="ECO:0007669"/>
    <property type="project" value="UniProtKB-KW"/>
</dbReference>
<dbReference type="CDD" id="cd03785">
    <property type="entry name" value="GT28_MurG"/>
    <property type="match status" value="1"/>
</dbReference>
<dbReference type="Gene3D" id="3.40.50.2000">
    <property type="entry name" value="Glycogen Phosphorylase B"/>
    <property type="match status" value="2"/>
</dbReference>
<dbReference type="HAMAP" id="MF_00033">
    <property type="entry name" value="MurG"/>
    <property type="match status" value="1"/>
</dbReference>
<dbReference type="InterPro" id="IPR006009">
    <property type="entry name" value="GlcNAc_MurG"/>
</dbReference>
<dbReference type="InterPro" id="IPR007235">
    <property type="entry name" value="Glyco_trans_28_C"/>
</dbReference>
<dbReference type="InterPro" id="IPR004276">
    <property type="entry name" value="GlycoTrans_28_N"/>
</dbReference>
<dbReference type="NCBIfam" id="TIGR01133">
    <property type="entry name" value="murG"/>
    <property type="match status" value="1"/>
</dbReference>
<dbReference type="PANTHER" id="PTHR21015:SF22">
    <property type="entry name" value="GLYCOSYLTRANSFERASE"/>
    <property type="match status" value="1"/>
</dbReference>
<dbReference type="PANTHER" id="PTHR21015">
    <property type="entry name" value="UDP-N-ACETYLGLUCOSAMINE--N-ACETYLMURAMYL-(PENTAPEPTIDE) PYROPHOSPHORYL-UNDECAPRENOL N-ACETYLGLUCOSAMINE TRANSFERASE 1"/>
    <property type="match status" value="1"/>
</dbReference>
<dbReference type="Pfam" id="PF04101">
    <property type="entry name" value="Glyco_tran_28_C"/>
    <property type="match status" value="1"/>
</dbReference>
<dbReference type="Pfam" id="PF03033">
    <property type="entry name" value="Glyco_transf_28"/>
    <property type="match status" value="1"/>
</dbReference>
<dbReference type="SUPFAM" id="SSF53756">
    <property type="entry name" value="UDP-Glycosyltransferase/glycogen phosphorylase"/>
    <property type="match status" value="1"/>
</dbReference>
<protein>
    <recommendedName>
        <fullName evidence="1">UDP-N-acetylglucosamine--N-acetylmuramyl-(pentapeptide) pyrophosphoryl-undecaprenol N-acetylglucosamine transferase</fullName>
        <ecNumber evidence="1">2.4.1.227</ecNumber>
    </recommendedName>
    <alternativeName>
        <fullName evidence="1">Undecaprenyl-PP-MurNAc-pentapeptide-UDPGlcNAc GlcNAc transferase</fullName>
    </alternativeName>
</protein>
<comment type="function">
    <text evidence="1">Cell wall formation. Catalyzes the transfer of a GlcNAc subunit on undecaprenyl-pyrophosphoryl-MurNAc-pentapeptide (lipid intermediate I) to form undecaprenyl-pyrophosphoryl-MurNAc-(pentapeptide)GlcNAc (lipid intermediate II).</text>
</comment>
<comment type="catalytic activity">
    <reaction evidence="1">
        <text>di-trans,octa-cis-undecaprenyl diphospho-N-acetyl-alpha-D-muramoyl-L-alanyl-D-glutamyl-meso-2,6-diaminopimeloyl-D-alanyl-D-alanine + UDP-N-acetyl-alpha-D-glucosamine = di-trans,octa-cis-undecaprenyl diphospho-[N-acetyl-alpha-D-glucosaminyl-(1-&gt;4)]-N-acetyl-alpha-D-muramoyl-L-alanyl-D-glutamyl-meso-2,6-diaminopimeloyl-D-alanyl-D-alanine + UDP + H(+)</text>
        <dbReference type="Rhea" id="RHEA:31227"/>
        <dbReference type="ChEBI" id="CHEBI:15378"/>
        <dbReference type="ChEBI" id="CHEBI:57705"/>
        <dbReference type="ChEBI" id="CHEBI:58223"/>
        <dbReference type="ChEBI" id="CHEBI:61387"/>
        <dbReference type="ChEBI" id="CHEBI:61388"/>
        <dbReference type="EC" id="2.4.1.227"/>
    </reaction>
</comment>
<comment type="pathway">
    <text evidence="1">Cell wall biogenesis; peptidoglycan biosynthesis.</text>
</comment>
<comment type="subcellular location">
    <subcellularLocation>
        <location evidence="1">Cell membrane</location>
        <topology evidence="1">Peripheral membrane protein</topology>
        <orientation evidence="1">Cytoplasmic side</orientation>
    </subcellularLocation>
</comment>
<comment type="similarity">
    <text evidence="1">Belongs to the glycosyltransferase 28 family. MurG subfamily.</text>
</comment>
<feature type="chain" id="PRO_0000225108" description="UDP-N-acetylglucosamine--N-acetylmuramyl-(pentapeptide) pyrophosphoryl-undecaprenol N-acetylglucosamine transferase">
    <location>
        <begin position="1"/>
        <end position="379"/>
    </location>
</feature>
<feature type="binding site" evidence="1">
    <location>
        <begin position="10"/>
        <end position="12"/>
    </location>
    <ligand>
        <name>UDP-N-acetyl-alpha-D-glucosamine</name>
        <dbReference type="ChEBI" id="CHEBI:57705"/>
    </ligand>
</feature>
<feature type="binding site" evidence="1">
    <location>
        <position position="124"/>
    </location>
    <ligand>
        <name>UDP-N-acetyl-alpha-D-glucosamine</name>
        <dbReference type="ChEBI" id="CHEBI:57705"/>
    </ligand>
</feature>
<feature type="binding site" evidence="1">
    <location>
        <position position="161"/>
    </location>
    <ligand>
        <name>UDP-N-acetyl-alpha-D-glucosamine</name>
        <dbReference type="ChEBI" id="CHEBI:57705"/>
    </ligand>
</feature>
<feature type="binding site" evidence="1">
    <location>
        <position position="195"/>
    </location>
    <ligand>
        <name>UDP-N-acetyl-alpha-D-glucosamine</name>
        <dbReference type="ChEBI" id="CHEBI:57705"/>
    </ligand>
</feature>
<feature type="binding site" evidence="1">
    <location>
        <position position="291"/>
    </location>
    <ligand>
        <name>UDP-N-acetyl-alpha-D-glucosamine</name>
        <dbReference type="ChEBI" id="CHEBI:57705"/>
    </ligand>
</feature>
<proteinExistence type="inferred from homology"/>
<organism>
    <name type="scientific">Thermobifida fusca (strain YX)</name>
    <dbReference type="NCBI Taxonomy" id="269800"/>
    <lineage>
        <taxon>Bacteria</taxon>
        <taxon>Bacillati</taxon>
        <taxon>Actinomycetota</taxon>
        <taxon>Actinomycetes</taxon>
        <taxon>Streptosporangiales</taxon>
        <taxon>Nocardiopsidaceae</taxon>
        <taxon>Thermobifida</taxon>
    </lineage>
</organism>
<reference key="1">
    <citation type="journal article" date="2007" name="J. Bacteriol.">
        <title>Genome sequence and analysis of the soil cellulolytic actinomycete Thermobifida fusca YX.</title>
        <authorList>
            <person name="Lykidis A."/>
            <person name="Mavromatis K."/>
            <person name="Ivanova N."/>
            <person name="Anderson I."/>
            <person name="Land M."/>
            <person name="DiBartolo G."/>
            <person name="Martinez M."/>
            <person name="Lapidus A."/>
            <person name="Lucas S."/>
            <person name="Copeland A."/>
            <person name="Richardson P."/>
            <person name="Wilson D.B."/>
            <person name="Kyrpides N."/>
        </authorList>
    </citation>
    <scope>NUCLEOTIDE SEQUENCE [LARGE SCALE GENOMIC DNA]</scope>
    <source>
        <strain>YX</strain>
    </source>
</reference>
<keyword id="KW-0131">Cell cycle</keyword>
<keyword id="KW-0132">Cell division</keyword>
<keyword id="KW-1003">Cell membrane</keyword>
<keyword id="KW-0133">Cell shape</keyword>
<keyword id="KW-0961">Cell wall biogenesis/degradation</keyword>
<keyword id="KW-0328">Glycosyltransferase</keyword>
<keyword id="KW-0472">Membrane</keyword>
<keyword id="KW-0573">Peptidoglycan synthesis</keyword>
<keyword id="KW-0808">Transferase</keyword>
<evidence type="ECO:0000255" key="1">
    <source>
        <dbReference type="HAMAP-Rule" id="MF_00033"/>
    </source>
</evidence>